<accession>B4UER8</accession>
<evidence type="ECO:0000255" key="1">
    <source>
        <dbReference type="HAMAP-Rule" id="MF_00038"/>
    </source>
</evidence>
<organism>
    <name type="scientific">Anaeromyxobacter sp. (strain K)</name>
    <dbReference type="NCBI Taxonomy" id="447217"/>
    <lineage>
        <taxon>Bacteria</taxon>
        <taxon>Pseudomonadati</taxon>
        <taxon>Myxococcota</taxon>
        <taxon>Myxococcia</taxon>
        <taxon>Myxococcales</taxon>
        <taxon>Cystobacterineae</taxon>
        <taxon>Anaeromyxobacteraceae</taxon>
        <taxon>Anaeromyxobacter</taxon>
    </lineage>
</organism>
<gene>
    <name evidence="1" type="primary">mraY</name>
    <name type="ordered locus">AnaeK_3824</name>
</gene>
<protein>
    <recommendedName>
        <fullName evidence="1">Phospho-N-acetylmuramoyl-pentapeptide-transferase</fullName>
        <ecNumber evidence="1">2.7.8.13</ecNumber>
    </recommendedName>
    <alternativeName>
        <fullName evidence="1">UDP-MurNAc-pentapeptide phosphotransferase</fullName>
    </alternativeName>
</protein>
<dbReference type="EC" id="2.7.8.13" evidence="1"/>
<dbReference type="EMBL" id="CP001131">
    <property type="protein sequence ID" value="ACG75035.1"/>
    <property type="molecule type" value="Genomic_DNA"/>
</dbReference>
<dbReference type="RefSeq" id="WP_011422816.1">
    <property type="nucleotide sequence ID" value="NC_011145.1"/>
</dbReference>
<dbReference type="SMR" id="B4UER8"/>
<dbReference type="KEGG" id="ank:AnaeK_3824"/>
<dbReference type="HOGENOM" id="CLU_023982_0_0_7"/>
<dbReference type="OrthoDB" id="9805475at2"/>
<dbReference type="UniPathway" id="UPA00219"/>
<dbReference type="Proteomes" id="UP000001871">
    <property type="component" value="Chromosome"/>
</dbReference>
<dbReference type="GO" id="GO:0005886">
    <property type="term" value="C:plasma membrane"/>
    <property type="evidence" value="ECO:0007669"/>
    <property type="project" value="UniProtKB-SubCell"/>
</dbReference>
<dbReference type="GO" id="GO:0046872">
    <property type="term" value="F:metal ion binding"/>
    <property type="evidence" value="ECO:0007669"/>
    <property type="project" value="UniProtKB-KW"/>
</dbReference>
<dbReference type="GO" id="GO:0008963">
    <property type="term" value="F:phospho-N-acetylmuramoyl-pentapeptide-transferase activity"/>
    <property type="evidence" value="ECO:0007669"/>
    <property type="project" value="UniProtKB-UniRule"/>
</dbReference>
<dbReference type="GO" id="GO:0051992">
    <property type="term" value="F:UDP-N-acetylmuramoyl-L-alanyl-D-glutamyl-meso-2,6-diaminopimelyl-D-alanyl-D-alanine:undecaprenyl-phosphate transferase activity"/>
    <property type="evidence" value="ECO:0007669"/>
    <property type="project" value="RHEA"/>
</dbReference>
<dbReference type="GO" id="GO:0051301">
    <property type="term" value="P:cell division"/>
    <property type="evidence" value="ECO:0007669"/>
    <property type="project" value="UniProtKB-KW"/>
</dbReference>
<dbReference type="GO" id="GO:0071555">
    <property type="term" value="P:cell wall organization"/>
    <property type="evidence" value="ECO:0007669"/>
    <property type="project" value="UniProtKB-KW"/>
</dbReference>
<dbReference type="GO" id="GO:0009252">
    <property type="term" value="P:peptidoglycan biosynthetic process"/>
    <property type="evidence" value="ECO:0007669"/>
    <property type="project" value="UniProtKB-UniRule"/>
</dbReference>
<dbReference type="GO" id="GO:0008360">
    <property type="term" value="P:regulation of cell shape"/>
    <property type="evidence" value="ECO:0007669"/>
    <property type="project" value="UniProtKB-KW"/>
</dbReference>
<dbReference type="CDD" id="cd06852">
    <property type="entry name" value="GT_MraY"/>
    <property type="match status" value="1"/>
</dbReference>
<dbReference type="HAMAP" id="MF_00038">
    <property type="entry name" value="MraY"/>
    <property type="match status" value="1"/>
</dbReference>
<dbReference type="InterPro" id="IPR000715">
    <property type="entry name" value="Glycosyl_transferase_4"/>
</dbReference>
<dbReference type="InterPro" id="IPR003524">
    <property type="entry name" value="PNAcMuramoyl-5peptid_Trfase"/>
</dbReference>
<dbReference type="InterPro" id="IPR018480">
    <property type="entry name" value="PNAcMuramoyl-5peptid_Trfase_CS"/>
</dbReference>
<dbReference type="NCBIfam" id="TIGR00445">
    <property type="entry name" value="mraY"/>
    <property type="match status" value="1"/>
</dbReference>
<dbReference type="PANTHER" id="PTHR22926">
    <property type="entry name" value="PHOSPHO-N-ACETYLMURAMOYL-PENTAPEPTIDE-TRANSFERASE"/>
    <property type="match status" value="1"/>
</dbReference>
<dbReference type="PANTHER" id="PTHR22926:SF5">
    <property type="entry name" value="PHOSPHO-N-ACETYLMURAMOYL-PENTAPEPTIDE-TRANSFERASE HOMOLOG"/>
    <property type="match status" value="1"/>
</dbReference>
<dbReference type="Pfam" id="PF00953">
    <property type="entry name" value="Glycos_transf_4"/>
    <property type="match status" value="1"/>
</dbReference>
<dbReference type="PROSITE" id="PS01347">
    <property type="entry name" value="MRAY_1"/>
    <property type="match status" value="1"/>
</dbReference>
<dbReference type="PROSITE" id="PS01348">
    <property type="entry name" value="MRAY_2"/>
    <property type="match status" value="1"/>
</dbReference>
<comment type="function">
    <text evidence="1">Catalyzes the initial step of the lipid cycle reactions in the biosynthesis of the cell wall peptidoglycan: transfers peptidoglycan precursor phospho-MurNAc-pentapeptide from UDP-MurNAc-pentapeptide onto the lipid carrier undecaprenyl phosphate, yielding undecaprenyl-pyrophosphoryl-MurNAc-pentapeptide, known as lipid I.</text>
</comment>
<comment type="catalytic activity">
    <reaction evidence="1">
        <text>UDP-N-acetyl-alpha-D-muramoyl-L-alanyl-gamma-D-glutamyl-meso-2,6-diaminopimeloyl-D-alanyl-D-alanine + di-trans,octa-cis-undecaprenyl phosphate = di-trans,octa-cis-undecaprenyl diphospho-N-acetyl-alpha-D-muramoyl-L-alanyl-D-glutamyl-meso-2,6-diaminopimeloyl-D-alanyl-D-alanine + UMP</text>
        <dbReference type="Rhea" id="RHEA:28386"/>
        <dbReference type="ChEBI" id="CHEBI:57865"/>
        <dbReference type="ChEBI" id="CHEBI:60392"/>
        <dbReference type="ChEBI" id="CHEBI:61386"/>
        <dbReference type="ChEBI" id="CHEBI:61387"/>
        <dbReference type="EC" id="2.7.8.13"/>
    </reaction>
</comment>
<comment type="cofactor">
    <cofactor evidence="1">
        <name>Mg(2+)</name>
        <dbReference type="ChEBI" id="CHEBI:18420"/>
    </cofactor>
</comment>
<comment type="pathway">
    <text evidence="1">Cell wall biogenesis; peptidoglycan biosynthesis.</text>
</comment>
<comment type="subcellular location">
    <subcellularLocation>
        <location evidence="1">Cell inner membrane</location>
        <topology evidence="1">Multi-pass membrane protein</topology>
    </subcellularLocation>
</comment>
<comment type="similarity">
    <text evidence="1">Belongs to the glycosyltransferase 4 family. MraY subfamily.</text>
</comment>
<feature type="chain" id="PRO_1000090589" description="Phospho-N-acetylmuramoyl-pentapeptide-transferase">
    <location>
        <begin position="1"/>
        <end position="380"/>
    </location>
</feature>
<feature type="transmembrane region" description="Helical" evidence="1">
    <location>
        <begin position="26"/>
        <end position="46"/>
    </location>
</feature>
<feature type="transmembrane region" description="Helical" evidence="1">
    <location>
        <begin position="75"/>
        <end position="95"/>
    </location>
</feature>
<feature type="transmembrane region" description="Helical" evidence="1">
    <location>
        <begin position="98"/>
        <end position="118"/>
    </location>
</feature>
<feature type="transmembrane region" description="Helical" evidence="1">
    <location>
        <begin position="135"/>
        <end position="155"/>
    </location>
</feature>
<feature type="transmembrane region" description="Helical" evidence="1">
    <location>
        <begin position="161"/>
        <end position="181"/>
    </location>
</feature>
<feature type="transmembrane region" description="Helical" evidence="1">
    <location>
        <begin position="183"/>
        <end position="203"/>
    </location>
</feature>
<feature type="transmembrane region" description="Helical" evidence="1">
    <location>
        <begin position="222"/>
        <end position="242"/>
    </location>
</feature>
<feature type="transmembrane region" description="Helical" evidence="1">
    <location>
        <begin position="259"/>
        <end position="279"/>
    </location>
</feature>
<feature type="transmembrane region" description="Helical" evidence="1">
    <location>
        <begin position="283"/>
        <end position="303"/>
    </location>
</feature>
<feature type="transmembrane region" description="Helical" evidence="1">
    <location>
        <begin position="311"/>
        <end position="331"/>
    </location>
</feature>
<feature type="transmembrane region" description="Helical" evidence="1">
    <location>
        <begin position="357"/>
        <end position="377"/>
    </location>
</feature>
<reference key="1">
    <citation type="submission" date="2008-08" db="EMBL/GenBank/DDBJ databases">
        <title>Complete sequence of Anaeromyxobacter sp. K.</title>
        <authorList>
            <consortium name="US DOE Joint Genome Institute"/>
            <person name="Lucas S."/>
            <person name="Copeland A."/>
            <person name="Lapidus A."/>
            <person name="Glavina del Rio T."/>
            <person name="Dalin E."/>
            <person name="Tice H."/>
            <person name="Bruce D."/>
            <person name="Goodwin L."/>
            <person name="Pitluck S."/>
            <person name="Saunders E."/>
            <person name="Brettin T."/>
            <person name="Detter J.C."/>
            <person name="Han C."/>
            <person name="Larimer F."/>
            <person name="Land M."/>
            <person name="Hauser L."/>
            <person name="Kyrpides N."/>
            <person name="Ovchinnikiva G."/>
            <person name="Beliaev A."/>
        </authorList>
    </citation>
    <scope>NUCLEOTIDE SEQUENCE [LARGE SCALE GENOMIC DNA]</scope>
    <source>
        <strain>K</strain>
    </source>
</reference>
<keyword id="KW-0131">Cell cycle</keyword>
<keyword id="KW-0132">Cell division</keyword>
<keyword id="KW-0997">Cell inner membrane</keyword>
<keyword id="KW-1003">Cell membrane</keyword>
<keyword id="KW-0133">Cell shape</keyword>
<keyword id="KW-0961">Cell wall biogenesis/degradation</keyword>
<keyword id="KW-0460">Magnesium</keyword>
<keyword id="KW-0472">Membrane</keyword>
<keyword id="KW-0479">Metal-binding</keyword>
<keyword id="KW-0573">Peptidoglycan synthesis</keyword>
<keyword id="KW-0808">Transferase</keyword>
<keyword id="KW-0812">Transmembrane</keyword>
<keyword id="KW-1133">Transmembrane helix</keyword>
<sequence>MLYHLLYPLAYKLSLLNVLRYPSFRIVAAGLTAMVLGLLLGPIFIERMRVLQYGSTNVREDTPDTHKKKAGTPSMGGALILASVAIATLLFADLANRFVWAALLVTLGYGAIGFTDDWLKISKKNSKGLAGKKKLVLQVLVVVVVYYACLTDWRFHVEHRFPWVFVGSYVDLHVTLPFVPSRLFNPDLGFLYLPFMVFVVIATSNAVNLTDGLDGLAIGPTVVSAMTFLALSYVAGATIAGFSLAEYLRVPYIPGAEELGVFCSAIFGAGVAFLWYNTYPASVFMGDVGSLALGGGLGMMAVLTKNEFASAILHGVFLTETVSVILQVWSFKTTGKRIFRMAPIHHHYELKGWAEPKIIVRFWIISVMLALVALLSIKLR</sequence>
<name>MRAY_ANASK</name>
<proteinExistence type="inferred from homology"/>